<name>DPM2_SCHPO</name>
<protein>
    <recommendedName>
        <fullName>Dolichol phosphate-mannose biosynthesis regulatory protein</fullName>
    </recommendedName>
</protein>
<organism>
    <name type="scientific">Schizosaccharomyces pombe (strain 972 / ATCC 24843)</name>
    <name type="common">Fission yeast</name>
    <dbReference type="NCBI Taxonomy" id="284812"/>
    <lineage>
        <taxon>Eukaryota</taxon>
        <taxon>Fungi</taxon>
        <taxon>Dikarya</taxon>
        <taxon>Ascomycota</taxon>
        <taxon>Taphrinomycotina</taxon>
        <taxon>Schizosaccharomycetes</taxon>
        <taxon>Schizosaccharomycetales</taxon>
        <taxon>Schizosaccharomycetaceae</taxon>
        <taxon>Schizosaccharomyces</taxon>
    </lineage>
</organism>
<reference key="1">
    <citation type="journal article" date="2002" name="Nature">
        <title>The genome sequence of Schizosaccharomyces pombe.</title>
        <authorList>
            <person name="Wood V."/>
            <person name="Gwilliam R."/>
            <person name="Rajandream M.A."/>
            <person name="Lyne M.H."/>
            <person name="Lyne R."/>
            <person name="Stewart A."/>
            <person name="Sgouros J.G."/>
            <person name="Peat N."/>
            <person name="Hayles J."/>
            <person name="Baker S.G."/>
            <person name="Basham D."/>
            <person name="Bowman S."/>
            <person name="Brooks K."/>
            <person name="Brown D."/>
            <person name="Brown S."/>
            <person name="Chillingworth T."/>
            <person name="Churcher C.M."/>
            <person name="Collins M."/>
            <person name="Connor R."/>
            <person name="Cronin A."/>
            <person name="Davis P."/>
            <person name="Feltwell T."/>
            <person name="Fraser A."/>
            <person name="Gentles S."/>
            <person name="Goble A."/>
            <person name="Hamlin N."/>
            <person name="Harris D.E."/>
            <person name="Hidalgo J."/>
            <person name="Hodgson G."/>
            <person name="Holroyd S."/>
            <person name="Hornsby T."/>
            <person name="Howarth S."/>
            <person name="Huckle E.J."/>
            <person name="Hunt S."/>
            <person name="Jagels K."/>
            <person name="James K.D."/>
            <person name="Jones L."/>
            <person name="Jones M."/>
            <person name="Leather S."/>
            <person name="McDonald S."/>
            <person name="McLean J."/>
            <person name="Mooney P."/>
            <person name="Moule S."/>
            <person name="Mungall K.L."/>
            <person name="Murphy L.D."/>
            <person name="Niblett D."/>
            <person name="Odell C."/>
            <person name="Oliver K."/>
            <person name="O'Neil S."/>
            <person name="Pearson D."/>
            <person name="Quail M.A."/>
            <person name="Rabbinowitsch E."/>
            <person name="Rutherford K.M."/>
            <person name="Rutter S."/>
            <person name="Saunders D."/>
            <person name="Seeger K."/>
            <person name="Sharp S."/>
            <person name="Skelton J."/>
            <person name="Simmonds M.N."/>
            <person name="Squares R."/>
            <person name="Squares S."/>
            <person name="Stevens K."/>
            <person name="Taylor K."/>
            <person name="Taylor R.G."/>
            <person name="Tivey A."/>
            <person name="Walsh S.V."/>
            <person name="Warren T."/>
            <person name="Whitehead S."/>
            <person name="Woodward J.R."/>
            <person name="Volckaert G."/>
            <person name="Aert R."/>
            <person name="Robben J."/>
            <person name="Grymonprez B."/>
            <person name="Weltjens I."/>
            <person name="Vanstreels E."/>
            <person name="Rieger M."/>
            <person name="Schaefer M."/>
            <person name="Mueller-Auer S."/>
            <person name="Gabel C."/>
            <person name="Fuchs M."/>
            <person name="Duesterhoeft A."/>
            <person name="Fritzc C."/>
            <person name="Holzer E."/>
            <person name="Moestl D."/>
            <person name="Hilbert H."/>
            <person name="Borzym K."/>
            <person name="Langer I."/>
            <person name="Beck A."/>
            <person name="Lehrach H."/>
            <person name="Reinhardt R."/>
            <person name="Pohl T.M."/>
            <person name="Eger P."/>
            <person name="Zimmermann W."/>
            <person name="Wedler H."/>
            <person name="Wambutt R."/>
            <person name="Purnelle B."/>
            <person name="Goffeau A."/>
            <person name="Cadieu E."/>
            <person name="Dreano S."/>
            <person name="Gloux S."/>
            <person name="Lelaure V."/>
            <person name="Mottier S."/>
            <person name="Galibert F."/>
            <person name="Aves S.J."/>
            <person name="Xiang Z."/>
            <person name="Hunt C."/>
            <person name="Moore K."/>
            <person name="Hurst S.M."/>
            <person name="Lucas M."/>
            <person name="Rochet M."/>
            <person name="Gaillardin C."/>
            <person name="Tallada V.A."/>
            <person name="Garzon A."/>
            <person name="Thode G."/>
            <person name="Daga R.R."/>
            <person name="Cruzado L."/>
            <person name="Jimenez J."/>
            <person name="Sanchez M."/>
            <person name="del Rey F."/>
            <person name="Benito J."/>
            <person name="Dominguez A."/>
            <person name="Revuelta J.L."/>
            <person name="Moreno S."/>
            <person name="Armstrong J."/>
            <person name="Forsburg S.L."/>
            <person name="Cerutti L."/>
            <person name="Lowe T."/>
            <person name="McCombie W.R."/>
            <person name="Paulsen I."/>
            <person name="Potashkin J."/>
            <person name="Shpakovski G.V."/>
            <person name="Ussery D."/>
            <person name="Barrell B.G."/>
            <person name="Nurse P."/>
        </authorList>
    </citation>
    <scope>NUCLEOTIDE SEQUENCE [LARGE SCALE GENOMIC DNA]</scope>
    <source>
        <strain>972 / ATCC 24843</strain>
    </source>
</reference>
<gene>
    <name type="primary">dpm2</name>
    <name type="ORF">SPBC21B10.11</name>
</gene>
<keyword id="KW-0256">Endoplasmic reticulum</keyword>
<keyword id="KW-0472">Membrane</keyword>
<keyword id="KW-1185">Reference proteome</keyword>
<keyword id="KW-0812">Transmembrane</keyword>
<keyword id="KW-1133">Transmembrane helix</keyword>
<sequence length="72" mass="8267">MIVYISTAAFLYYTIWVLIMPFVDNMNISQKLFLDREWAITIPVAVMLFGICLIGTFVSLLMIKSSKKKSDL</sequence>
<feature type="chain" id="PRO_0000220876" description="Dolichol phosphate-mannose biosynthesis regulatory protein">
    <location>
        <begin position="1"/>
        <end position="72"/>
    </location>
</feature>
<feature type="transmembrane region" description="Helical" evidence="2">
    <location>
        <begin position="2"/>
        <end position="22"/>
    </location>
</feature>
<feature type="transmembrane region" description="Helical" evidence="2">
    <location>
        <begin position="38"/>
        <end position="58"/>
    </location>
</feature>
<accession>Q9USW6</accession>
<dbReference type="EMBL" id="CU329671">
    <property type="protein sequence ID" value="CAB57919.1"/>
    <property type="molecule type" value="Genomic_DNA"/>
</dbReference>
<dbReference type="PIR" id="T39916">
    <property type="entry name" value="T39916"/>
</dbReference>
<dbReference type="RefSeq" id="NP_595676.1">
    <property type="nucleotide sequence ID" value="NM_001021571.2"/>
</dbReference>
<dbReference type="SMR" id="Q9USW6"/>
<dbReference type="BioGRID" id="277231">
    <property type="interactions" value="2"/>
</dbReference>
<dbReference type="FunCoup" id="Q9USW6">
    <property type="interactions" value="59"/>
</dbReference>
<dbReference type="STRING" id="284812.Q9USW6"/>
<dbReference type="PaxDb" id="4896-SPBC21B10.11.1"/>
<dbReference type="EnsemblFungi" id="SPBC21B10.11.1">
    <property type="protein sequence ID" value="SPBC21B10.11.1:pep"/>
    <property type="gene ID" value="SPBC21B10.11"/>
</dbReference>
<dbReference type="GeneID" id="2540708"/>
<dbReference type="KEGG" id="spo:2540708"/>
<dbReference type="PomBase" id="SPBC21B10.11">
    <property type="gene designation" value="dpm2"/>
</dbReference>
<dbReference type="VEuPathDB" id="FungiDB:SPBC21B10.11"/>
<dbReference type="eggNOG" id="KOG3488">
    <property type="taxonomic scope" value="Eukaryota"/>
</dbReference>
<dbReference type="HOGENOM" id="CLU_150144_2_1_1"/>
<dbReference type="InParanoid" id="Q9USW6"/>
<dbReference type="OMA" id="YTLWIIV"/>
<dbReference type="PhylomeDB" id="Q9USW6"/>
<dbReference type="PRO" id="PR:Q9USW6"/>
<dbReference type="Proteomes" id="UP000002485">
    <property type="component" value="Chromosome II"/>
</dbReference>
<dbReference type="GO" id="GO:0005737">
    <property type="term" value="C:cytoplasm"/>
    <property type="evidence" value="ECO:0007005"/>
    <property type="project" value="PomBase"/>
</dbReference>
<dbReference type="GO" id="GO:0033185">
    <property type="term" value="C:dolichol-phosphate-mannose synthase complex"/>
    <property type="evidence" value="ECO:0000266"/>
    <property type="project" value="PomBase"/>
</dbReference>
<dbReference type="GO" id="GO:0005783">
    <property type="term" value="C:endoplasmic reticulum"/>
    <property type="evidence" value="ECO:0007005"/>
    <property type="project" value="PomBase"/>
</dbReference>
<dbReference type="GO" id="GO:0005789">
    <property type="term" value="C:endoplasmic reticulum membrane"/>
    <property type="evidence" value="ECO:0007669"/>
    <property type="project" value="UniProtKB-SubCell"/>
</dbReference>
<dbReference type="GO" id="GO:0008047">
    <property type="term" value="F:enzyme activator activity"/>
    <property type="evidence" value="ECO:0000266"/>
    <property type="project" value="PomBase"/>
</dbReference>
<dbReference type="GO" id="GO:0030234">
    <property type="term" value="F:enzyme regulator activity"/>
    <property type="evidence" value="ECO:0000318"/>
    <property type="project" value="GO_Central"/>
</dbReference>
<dbReference type="GO" id="GO:0180047">
    <property type="term" value="P:dolichol phosphate mannose biosynthetic process"/>
    <property type="evidence" value="ECO:0000304"/>
    <property type="project" value="PomBase"/>
</dbReference>
<dbReference type="GO" id="GO:0006506">
    <property type="term" value="P:GPI anchor biosynthetic process"/>
    <property type="evidence" value="ECO:0000318"/>
    <property type="project" value="GO_Central"/>
</dbReference>
<dbReference type="InterPro" id="IPR009914">
    <property type="entry name" value="DPM2"/>
</dbReference>
<dbReference type="PANTHER" id="PTHR15039">
    <property type="entry name" value="DOLICHOL PHOSPHATE-MANNOSE BIOSYNTHESIS REGULATORY PROTEIN"/>
    <property type="match status" value="1"/>
</dbReference>
<dbReference type="PANTHER" id="PTHR15039:SF11">
    <property type="entry name" value="DOLICHOL PHOSPHATE-MANNOSE BIOSYNTHESIS REGULATORY PROTEIN"/>
    <property type="match status" value="1"/>
</dbReference>
<dbReference type="Pfam" id="PF07297">
    <property type="entry name" value="DPM2"/>
    <property type="match status" value="1"/>
</dbReference>
<comment type="function">
    <text evidence="1">Regulates the biosynthesis of dolichol phosphate-mannose. Essential for the ER localization and stable expression of dpm1 (By similarity).</text>
</comment>
<comment type="subunit">
    <text evidence="1">Composed of three subunits; dpm1, dpm2 and dpm3.</text>
</comment>
<comment type="subcellular location">
    <subcellularLocation>
        <location evidence="1">Endoplasmic reticulum membrane</location>
        <topology evidence="1">Multi-pass membrane protein</topology>
    </subcellularLocation>
</comment>
<comment type="similarity">
    <text evidence="3">Belongs to the DPM2 family.</text>
</comment>
<proteinExistence type="inferred from homology"/>
<evidence type="ECO:0000250" key="1"/>
<evidence type="ECO:0000255" key="2"/>
<evidence type="ECO:0000305" key="3"/>